<accession>B0K213</accession>
<protein>
    <recommendedName>
        <fullName evidence="1">ATP-dependent helicase/nuclease subunit A</fullName>
        <ecNumber evidence="1">3.1.-.-</ecNumber>
        <ecNumber evidence="1">5.6.2.4</ecNumber>
    </recommendedName>
    <alternativeName>
        <fullName evidence="1">ATP-dependent helicase/nuclease AddA</fullName>
    </alternativeName>
    <alternativeName>
        <fullName evidence="1">DNA 3'-5' helicase AddA</fullName>
    </alternativeName>
</protein>
<sequence>MGTKWTEEQKQAITTRGSNLLVAAAAGSGKTAVLVERIINLITDEENPVDIDRLLVVTFTNAAASEMRERIAEALIAILDQNPEDKRLANQLTLLNKATITTIHSFCLEVVRNNFFLLDLDPNFRIGDDTETLLLQLEASEELFEEMYAKEDKDKEGFLTLVESYGGTKDDQDLQDILLRLYGFVRSLPWPEKWLKDVINTFRVEDNFKFETSKWAEVILDSLKVEISGILNTMLVAVDKLKNEAGLEGYFHAFQREAYEIEQLLQYDNWNEFKNHIQAIEFERLPNAGKDANKNVKEEVSNIRKKVKDKIKEIKEKFFSDSVEEIKDEIKALYPIMEALADLILLFDKKYKEKKREKGIIDFNDIEHFALQILTEIDEEGDVNPSEVALHYREKFEEIFVDEYQDSNLIQEEILSIIARENPPNRFMVGDVKQSIYRFRQANPYIFFEKYNSYSLDTGEKNQKILLYKNFRSRIEVIEAINYIFKKIMSKNIGEVNYTEEEKLNYGAEYEIPPEDSVTGGAVELHLIEKQKVEEEVEEKEEEKNEEKDFEEEEEDLIDDIQVEARVVAERIKQLFSQNFMVYDKNIKSYRAVDYRDIVVLLRATDRWAPVFLEELTQAGIPAFADTGTGYFDTTEIKTIISLLQVIDNPMQDIPLLAVLRSPIFSFTEEELIDLRLEDMEKTIYEAIKKASQREDELGEKAKNFLDTLKKWQEKAVYMPVDEFLWYLYKDTGYYSYVAAMPQGVQRQANLRILFERAKQYEETSFKGLFNFINFINRLKVSSGDMGSAKIVGENEKVVRIMSIHKSKGLEFPVVIVAGLGKQFNTKDLYQKILYHHFLGLGPEFVDFRRRISYPSIVKEAIKYKIKLEGLSEEMRVLYVALTRAKEKLILVGSARDIKKNVRKWANAAILQEKVSEYDILNGKSYMDWIGAAVIRHKDLEPLREFAGVSLSEEEDASKWEVKLWNKKDVLLEKEKNDKVDVVERLRSLDLDAHYSEFYKEVERRLNYVYPYEKACYLPAKLSVTEVKRILNAEVVDEDTTSIFEREVLKTPIFLEKKKGLTAAEKGIAMHLVMQKLDLDKDLSLEGIKEQIKDMVDREILTEEQAKEVNIHKIEGFFKTSLGERMLSSKNVKREVPFHIKLSSREIYKDLPEEYENEFIQVQGIIDCFFEEEDGLVLIDYKTDYVQEGKVEEIKERYKVQIELYSKALENITGKKVKEKYIYLFFNGNILEY</sequence>
<proteinExistence type="inferred from homology"/>
<gene>
    <name evidence="1" type="primary">addA</name>
    <name type="ordered locus">Teth514_0203</name>
</gene>
<name>ADDA_THEPX</name>
<feature type="chain" id="PRO_0000379361" description="ATP-dependent helicase/nuclease subunit A">
    <location>
        <begin position="1"/>
        <end position="1233"/>
    </location>
</feature>
<feature type="domain" description="UvrD-like helicase ATP-binding" evidence="1">
    <location>
        <begin position="3"/>
        <end position="474"/>
    </location>
</feature>
<feature type="domain" description="UvrD-like helicase C-terminal" evidence="1">
    <location>
        <begin position="518"/>
        <end position="809"/>
    </location>
</feature>
<feature type="region of interest" description="Disordered" evidence="2">
    <location>
        <begin position="533"/>
        <end position="555"/>
    </location>
</feature>
<feature type="binding site" evidence="1">
    <location>
        <begin position="24"/>
        <end position="31"/>
    </location>
    <ligand>
        <name>ATP</name>
        <dbReference type="ChEBI" id="CHEBI:30616"/>
    </ligand>
</feature>
<evidence type="ECO:0000255" key="1">
    <source>
        <dbReference type="HAMAP-Rule" id="MF_01451"/>
    </source>
</evidence>
<evidence type="ECO:0000256" key="2">
    <source>
        <dbReference type="SAM" id="MobiDB-lite"/>
    </source>
</evidence>
<keyword id="KW-0067">ATP-binding</keyword>
<keyword id="KW-0227">DNA damage</keyword>
<keyword id="KW-0234">DNA repair</keyword>
<keyword id="KW-0238">DNA-binding</keyword>
<keyword id="KW-0269">Exonuclease</keyword>
<keyword id="KW-0347">Helicase</keyword>
<keyword id="KW-0378">Hydrolase</keyword>
<keyword id="KW-0413">Isomerase</keyword>
<keyword id="KW-0540">Nuclease</keyword>
<keyword id="KW-0547">Nucleotide-binding</keyword>
<reference key="1">
    <citation type="submission" date="2008-01" db="EMBL/GenBank/DDBJ databases">
        <title>Complete sequence of Thermoanaerobacter sp. X514.</title>
        <authorList>
            <consortium name="US DOE Joint Genome Institute"/>
            <person name="Copeland A."/>
            <person name="Lucas S."/>
            <person name="Lapidus A."/>
            <person name="Barry K."/>
            <person name="Glavina del Rio T."/>
            <person name="Dalin E."/>
            <person name="Tice H."/>
            <person name="Pitluck S."/>
            <person name="Bruce D."/>
            <person name="Goodwin L."/>
            <person name="Saunders E."/>
            <person name="Brettin T."/>
            <person name="Detter J.C."/>
            <person name="Han C."/>
            <person name="Schmutz J."/>
            <person name="Larimer F."/>
            <person name="Land M."/>
            <person name="Hauser L."/>
            <person name="Kyrpides N."/>
            <person name="Kim E."/>
            <person name="Hemme C."/>
            <person name="Fields M.W."/>
            <person name="He Z."/>
            <person name="Zhou J."/>
            <person name="Richardson P."/>
        </authorList>
    </citation>
    <scope>NUCLEOTIDE SEQUENCE [LARGE SCALE GENOMIC DNA]</scope>
    <source>
        <strain>X514</strain>
    </source>
</reference>
<organism>
    <name type="scientific">Thermoanaerobacter sp. (strain X514)</name>
    <dbReference type="NCBI Taxonomy" id="399726"/>
    <lineage>
        <taxon>Bacteria</taxon>
        <taxon>Bacillati</taxon>
        <taxon>Bacillota</taxon>
        <taxon>Clostridia</taxon>
        <taxon>Thermoanaerobacterales</taxon>
        <taxon>Thermoanaerobacteraceae</taxon>
        <taxon>Thermoanaerobacter</taxon>
    </lineage>
</organism>
<comment type="function">
    <text evidence="1">The heterodimer acts as both an ATP-dependent DNA helicase and an ATP-dependent, dual-direction single-stranded exonuclease. Recognizes the chi site generating a DNA molecule suitable for the initiation of homologous recombination. The AddA nuclease domain is required for chi fragment generation; this subunit has the helicase and 3' -&gt; 5' nuclease activities.</text>
</comment>
<comment type="catalytic activity">
    <reaction evidence="1">
        <text>Couples ATP hydrolysis with the unwinding of duplex DNA by translocating in the 3'-5' direction.</text>
        <dbReference type="EC" id="5.6.2.4"/>
    </reaction>
</comment>
<comment type="catalytic activity">
    <reaction evidence="1">
        <text>ATP + H2O = ADP + phosphate + H(+)</text>
        <dbReference type="Rhea" id="RHEA:13065"/>
        <dbReference type="ChEBI" id="CHEBI:15377"/>
        <dbReference type="ChEBI" id="CHEBI:15378"/>
        <dbReference type="ChEBI" id="CHEBI:30616"/>
        <dbReference type="ChEBI" id="CHEBI:43474"/>
        <dbReference type="ChEBI" id="CHEBI:456216"/>
        <dbReference type="EC" id="5.6.2.4"/>
    </reaction>
</comment>
<comment type="cofactor">
    <cofactor evidence="1">
        <name>Mg(2+)</name>
        <dbReference type="ChEBI" id="CHEBI:18420"/>
    </cofactor>
</comment>
<comment type="subunit">
    <text evidence="1">Heterodimer of AddA and AddB/RexB.</text>
</comment>
<comment type="similarity">
    <text evidence="1">Belongs to the helicase family. AddA subfamily.</text>
</comment>
<dbReference type="EC" id="3.1.-.-" evidence="1"/>
<dbReference type="EC" id="5.6.2.4" evidence="1"/>
<dbReference type="EMBL" id="CP000923">
    <property type="protein sequence ID" value="ABY91521.1"/>
    <property type="molecule type" value="Genomic_DNA"/>
</dbReference>
<dbReference type="RefSeq" id="WP_009051916.1">
    <property type="nucleotide sequence ID" value="NC_010320.1"/>
</dbReference>
<dbReference type="SMR" id="B0K213"/>
<dbReference type="KEGG" id="tex:Teth514_0203"/>
<dbReference type="HOGENOM" id="CLU_001114_3_1_9"/>
<dbReference type="Proteomes" id="UP000002155">
    <property type="component" value="Chromosome"/>
</dbReference>
<dbReference type="GO" id="GO:0005829">
    <property type="term" value="C:cytosol"/>
    <property type="evidence" value="ECO:0007669"/>
    <property type="project" value="TreeGrafter"/>
</dbReference>
<dbReference type="GO" id="GO:0033202">
    <property type="term" value="C:DNA helicase complex"/>
    <property type="evidence" value="ECO:0007669"/>
    <property type="project" value="TreeGrafter"/>
</dbReference>
<dbReference type="GO" id="GO:0043138">
    <property type="term" value="F:3'-5' DNA helicase activity"/>
    <property type="evidence" value="ECO:0007669"/>
    <property type="project" value="UniProtKB-UniRule"/>
</dbReference>
<dbReference type="GO" id="GO:0008408">
    <property type="term" value="F:3'-5' exonuclease activity"/>
    <property type="evidence" value="ECO:0007669"/>
    <property type="project" value="UniProtKB-UniRule"/>
</dbReference>
<dbReference type="GO" id="GO:0005524">
    <property type="term" value="F:ATP binding"/>
    <property type="evidence" value="ECO:0007669"/>
    <property type="project" value="UniProtKB-UniRule"/>
</dbReference>
<dbReference type="GO" id="GO:0016887">
    <property type="term" value="F:ATP hydrolysis activity"/>
    <property type="evidence" value="ECO:0007669"/>
    <property type="project" value="RHEA"/>
</dbReference>
<dbReference type="GO" id="GO:0003690">
    <property type="term" value="F:double-stranded DNA binding"/>
    <property type="evidence" value="ECO:0007669"/>
    <property type="project" value="UniProtKB-UniRule"/>
</dbReference>
<dbReference type="GO" id="GO:0000724">
    <property type="term" value="P:double-strand break repair via homologous recombination"/>
    <property type="evidence" value="ECO:0007669"/>
    <property type="project" value="UniProtKB-UniRule"/>
</dbReference>
<dbReference type="CDD" id="cd17932">
    <property type="entry name" value="DEXQc_UvrD"/>
    <property type="match status" value="1"/>
</dbReference>
<dbReference type="FunFam" id="3.40.50.300:FF:001236">
    <property type="entry name" value="ATP-dependent helicase/nuclease subunit A"/>
    <property type="match status" value="1"/>
</dbReference>
<dbReference type="Gene3D" id="3.90.320.10">
    <property type="match status" value="1"/>
</dbReference>
<dbReference type="Gene3D" id="3.40.50.300">
    <property type="entry name" value="P-loop containing nucleotide triphosphate hydrolases"/>
    <property type="match status" value="4"/>
</dbReference>
<dbReference type="HAMAP" id="MF_01451">
    <property type="entry name" value="AddA"/>
    <property type="match status" value="1"/>
</dbReference>
<dbReference type="InterPro" id="IPR014152">
    <property type="entry name" value="AddA"/>
</dbReference>
<dbReference type="InterPro" id="IPR014017">
    <property type="entry name" value="DNA_helicase_UvrD-like_C"/>
</dbReference>
<dbReference type="InterPro" id="IPR000212">
    <property type="entry name" value="DNA_helicase_UvrD/REP"/>
</dbReference>
<dbReference type="InterPro" id="IPR027417">
    <property type="entry name" value="P-loop_NTPase"/>
</dbReference>
<dbReference type="InterPro" id="IPR011604">
    <property type="entry name" value="PDDEXK-like_dom_sf"/>
</dbReference>
<dbReference type="InterPro" id="IPR038726">
    <property type="entry name" value="PDDEXK_AddAB-type"/>
</dbReference>
<dbReference type="InterPro" id="IPR011335">
    <property type="entry name" value="Restrct_endonuc-II-like"/>
</dbReference>
<dbReference type="InterPro" id="IPR014016">
    <property type="entry name" value="UvrD-like_ATP-bd"/>
</dbReference>
<dbReference type="NCBIfam" id="TIGR02785">
    <property type="entry name" value="addA_Gpos"/>
    <property type="match status" value="1"/>
</dbReference>
<dbReference type="PANTHER" id="PTHR11070:SF48">
    <property type="entry name" value="ATP-DEPENDENT HELICASE_NUCLEASE SUBUNIT A"/>
    <property type="match status" value="1"/>
</dbReference>
<dbReference type="PANTHER" id="PTHR11070">
    <property type="entry name" value="UVRD / RECB / PCRA DNA HELICASE FAMILY MEMBER"/>
    <property type="match status" value="1"/>
</dbReference>
<dbReference type="Pfam" id="PF12705">
    <property type="entry name" value="PDDEXK_1"/>
    <property type="match status" value="1"/>
</dbReference>
<dbReference type="Pfam" id="PF00580">
    <property type="entry name" value="UvrD-helicase"/>
    <property type="match status" value="1"/>
</dbReference>
<dbReference type="Pfam" id="PF13361">
    <property type="entry name" value="UvrD_C"/>
    <property type="match status" value="1"/>
</dbReference>
<dbReference type="SUPFAM" id="SSF52540">
    <property type="entry name" value="P-loop containing nucleoside triphosphate hydrolases"/>
    <property type="match status" value="1"/>
</dbReference>
<dbReference type="SUPFAM" id="SSF52980">
    <property type="entry name" value="Restriction endonuclease-like"/>
    <property type="match status" value="1"/>
</dbReference>
<dbReference type="PROSITE" id="PS51198">
    <property type="entry name" value="UVRD_HELICASE_ATP_BIND"/>
    <property type="match status" value="1"/>
</dbReference>
<dbReference type="PROSITE" id="PS51217">
    <property type="entry name" value="UVRD_HELICASE_CTER"/>
    <property type="match status" value="1"/>
</dbReference>